<dbReference type="EMBL" id="AM180355">
    <property type="protein sequence ID" value="CAJ66887.1"/>
    <property type="molecule type" value="Genomic_DNA"/>
</dbReference>
<dbReference type="RefSeq" id="WP_011860633.1">
    <property type="nucleotide sequence ID" value="NZ_JAUPES010000043.1"/>
</dbReference>
<dbReference type="RefSeq" id="YP_001086536.1">
    <property type="nucleotide sequence ID" value="NC_009089.1"/>
</dbReference>
<dbReference type="SMR" id="Q18CF6"/>
<dbReference type="STRING" id="272563.CD630_00720"/>
<dbReference type="EnsemblBacteria" id="CAJ66887">
    <property type="protein sequence ID" value="CAJ66887"/>
    <property type="gene ID" value="CD630_00720"/>
</dbReference>
<dbReference type="KEGG" id="cdf:CD630_00720"/>
<dbReference type="KEGG" id="pdc:CDIF630_00138"/>
<dbReference type="PATRIC" id="fig|272563.120.peg.78"/>
<dbReference type="eggNOG" id="COG0051">
    <property type="taxonomic scope" value="Bacteria"/>
</dbReference>
<dbReference type="OrthoDB" id="9804464at2"/>
<dbReference type="PhylomeDB" id="Q18CF6"/>
<dbReference type="BioCyc" id="PDIF272563:G12WB-126-MONOMER"/>
<dbReference type="Proteomes" id="UP000001978">
    <property type="component" value="Chromosome"/>
</dbReference>
<dbReference type="GO" id="GO:1990904">
    <property type="term" value="C:ribonucleoprotein complex"/>
    <property type="evidence" value="ECO:0007669"/>
    <property type="project" value="UniProtKB-KW"/>
</dbReference>
<dbReference type="GO" id="GO:0005840">
    <property type="term" value="C:ribosome"/>
    <property type="evidence" value="ECO:0007669"/>
    <property type="project" value="UniProtKB-KW"/>
</dbReference>
<dbReference type="GO" id="GO:0003735">
    <property type="term" value="F:structural constituent of ribosome"/>
    <property type="evidence" value="ECO:0007669"/>
    <property type="project" value="InterPro"/>
</dbReference>
<dbReference type="GO" id="GO:0000049">
    <property type="term" value="F:tRNA binding"/>
    <property type="evidence" value="ECO:0007669"/>
    <property type="project" value="UniProtKB-UniRule"/>
</dbReference>
<dbReference type="GO" id="GO:0006412">
    <property type="term" value="P:translation"/>
    <property type="evidence" value="ECO:0007669"/>
    <property type="project" value="UniProtKB-UniRule"/>
</dbReference>
<dbReference type="FunFam" id="3.30.70.600:FF:000001">
    <property type="entry name" value="30S ribosomal protein S10"/>
    <property type="match status" value="1"/>
</dbReference>
<dbReference type="Gene3D" id="3.30.70.600">
    <property type="entry name" value="Ribosomal protein S10 domain"/>
    <property type="match status" value="1"/>
</dbReference>
<dbReference type="HAMAP" id="MF_00508">
    <property type="entry name" value="Ribosomal_uS10"/>
    <property type="match status" value="1"/>
</dbReference>
<dbReference type="InterPro" id="IPR001848">
    <property type="entry name" value="Ribosomal_uS10"/>
</dbReference>
<dbReference type="InterPro" id="IPR018268">
    <property type="entry name" value="Ribosomal_uS10_CS"/>
</dbReference>
<dbReference type="InterPro" id="IPR027486">
    <property type="entry name" value="Ribosomal_uS10_dom"/>
</dbReference>
<dbReference type="InterPro" id="IPR036838">
    <property type="entry name" value="Ribosomal_uS10_dom_sf"/>
</dbReference>
<dbReference type="NCBIfam" id="NF001861">
    <property type="entry name" value="PRK00596.1"/>
    <property type="match status" value="1"/>
</dbReference>
<dbReference type="NCBIfam" id="TIGR01049">
    <property type="entry name" value="rpsJ_bact"/>
    <property type="match status" value="1"/>
</dbReference>
<dbReference type="PANTHER" id="PTHR11700">
    <property type="entry name" value="30S RIBOSOMAL PROTEIN S10 FAMILY MEMBER"/>
    <property type="match status" value="1"/>
</dbReference>
<dbReference type="Pfam" id="PF00338">
    <property type="entry name" value="Ribosomal_S10"/>
    <property type="match status" value="1"/>
</dbReference>
<dbReference type="PRINTS" id="PR00971">
    <property type="entry name" value="RIBOSOMALS10"/>
</dbReference>
<dbReference type="SMART" id="SM01403">
    <property type="entry name" value="Ribosomal_S10"/>
    <property type="match status" value="1"/>
</dbReference>
<dbReference type="SUPFAM" id="SSF54999">
    <property type="entry name" value="Ribosomal protein S10"/>
    <property type="match status" value="1"/>
</dbReference>
<dbReference type="PROSITE" id="PS00361">
    <property type="entry name" value="RIBOSOMAL_S10"/>
    <property type="match status" value="1"/>
</dbReference>
<keyword id="KW-1185">Reference proteome</keyword>
<keyword id="KW-0687">Ribonucleoprotein</keyword>
<keyword id="KW-0689">Ribosomal protein</keyword>
<name>RS10_CLOD6</name>
<organism>
    <name type="scientific">Clostridioides difficile (strain 630)</name>
    <name type="common">Peptoclostridium difficile</name>
    <dbReference type="NCBI Taxonomy" id="272563"/>
    <lineage>
        <taxon>Bacteria</taxon>
        <taxon>Bacillati</taxon>
        <taxon>Bacillota</taxon>
        <taxon>Clostridia</taxon>
        <taxon>Peptostreptococcales</taxon>
        <taxon>Peptostreptococcaceae</taxon>
        <taxon>Clostridioides</taxon>
    </lineage>
</organism>
<reference key="1">
    <citation type="journal article" date="2006" name="Nat. Genet.">
        <title>The multidrug-resistant human pathogen Clostridium difficile has a highly mobile, mosaic genome.</title>
        <authorList>
            <person name="Sebaihia M."/>
            <person name="Wren B.W."/>
            <person name="Mullany P."/>
            <person name="Fairweather N.F."/>
            <person name="Minton N."/>
            <person name="Stabler R."/>
            <person name="Thomson N.R."/>
            <person name="Roberts A.P."/>
            <person name="Cerdeno-Tarraga A.M."/>
            <person name="Wang H."/>
            <person name="Holden M.T.G."/>
            <person name="Wright A."/>
            <person name="Churcher C."/>
            <person name="Quail M.A."/>
            <person name="Baker S."/>
            <person name="Bason N."/>
            <person name="Brooks K."/>
            <person name="Chillingworth T."/>
            <person name="Cronin A."/>
            <person name="Davis P."/>
            <person name="Dowd L."/>
            <person name="Fraser A."/>
            <person name="Feltwell T."/>
            <person name="Hance Z."/>
            <person name="Holroyd S."/>
            <person name="Jagels K."/>
            <person name="Moule S."/>
            <person name="Mungall K."/>
            <person name="Price C."/>
            <person name="Rabbinowitsch E."/>
            <person name="Sharp S."/>
            <person name="Simmonds M."/>
            <person name="Stevens K."/>
            <person name="Unwin L."/>
            <person name="Whithead S."/>
            <person name="Dupuy B."/>
            <person name="Dougan G."/>
            <person name="Barrell B."/>
            <person name="Parkhill J."/>
        </authorList>
    </citation>
    <scope>NUCLEOTIDE SEQUENCE [LARGE SCALE GENOMIC DNA]</scope>
    <source>
        <strain>630</strain>
    </source>
</reference>
<comment type="function">
    <text evidence="1">Involved in the binding of tRNA to the ribosomes.</text>
</comment>
<comment type="subunit">
    <text evidence="1">Part of the 30S ribosomal subunit.</text>
</comment>
<comment type="similarity">
    <text evidence="1">Belongs to the universal ribosomal protein uS10 family.</text>
</comment>
<protein>
    <recommendedName>
        <fullName evidence="1">Small ribosomal subunit protein uS10</fullName>
    </recommendedName>
    <alternativeName>
        <fullName evidence="2">30S ribosomal protein S10</fullName>
    </alternativeName>
</protein>
<evidence type="ECO:0000255" key="1">
    <source>
        <dbReference type="HAMAP-Rule" id="MF_00508"/>
    </source>
</evidence>
<evidence type="ECO:0000305" key="2"/>
<accession>Q18CF6</accession>
<proteinExistence type="inferred from homology"/>
<gene>
    <name evidence="1" type="primary">rpsJ</name>
    <name type="ordered locus">CD630_00720</name>
</gene>
<feature type="chain" id="PRO_0000258542" description="Small ribosomal subunit protein uS10">
    <location>
        <begin position="1"/>
        <end position="103"/>
    </location>
</feature>
<sequence length="103" mass="11694">MAKNEKIRIRLKSYDHKLLDFSAGKIVETAKKAGSQVSGPVPLPTEKQVVTILRAVHKYKYSREQFEIRTHKRLIDIANPTPKTVDSLMRLDLPAGVDIEIKL</sequence>